<evidence type="ECO:0000255" key="1">
    <source>
        <dbReference type="HAMAP-Rule" id="MF_00109"/>
    </source>
</evidence>
<comment type="function">
    <text evidence="1">Catalyzes the specific phosphorylation of the 3-hydroxyl group of shikimic acid using ATP as a cosubstrate.</text>
</comment>
<comment type="catalytic activity">
    <reaction evidence="1">
        <text>shikimate + ATP = 3-phosphoshikimate + ADP + H(+)</text>
        <dbReference type="Rhea" id="RHEA:13121"/>
        <dbReference type="ChEBI" id="CHEBI:15378"/>
        <dbReference type="ChEBI" id="CHEBI:30616"/>
        <dbReference type="ChEBI" id="CHEBI:36208"/>
        <dbReference type="ChEBI" id="CHEBI:145989"/>
        <dbReference type="ChEBI" id="CHEBI:456216"/>
        <dbReference type="EC" id="2.7.1.71"/>
    </reaction>
</comment>
<comment type="cofactor">
    <cofactor evidence="1">
        <name>Mg(2+)</name>
        <dbReference type="ChEBI" id="CHEBI:18420"/>
    </cofactor>
    <text evidence="1">Binds 1 Mg(2+) ion per subunit.</text>
</comment>
<comment type="pathway">
    <text evidence="1">Metabolic intermediate biosynthesis; chorismate biosynthesis; chorismate from D-erythrose 4-phosphate and phosphoenolpyruvate: step 5/7.</text>
</comment>
<comment type="subunit">
    <text evidence="1">Monomer.</text>
</comment>
<comment type="subcellular location">
    <subcellularLocation>
        <location evidence="1">Cytoplasm</location>
    </subcellularLocation>
</comment>
<comment type="similarity">
    <text evidence="1">Belongs to the shikimate kinase family.</text>
</comment>
<feature type="chain" id="PRO_1000119056" description="Shikimate kinase">
    <location>
        <begin position="1"/>
        <end position="162"/>
    </location>
</feature>
<feature type="binding site" evidence="1">
    <location>
        <begin position="11"/>
        <end position="16"/>
    </location>
    <ligand>
        <name>ATP</name>
        <dbReference type="ChEBI" id="CHEBI:30616"/>
    </ligand>
</feature>
<feature type="binding site" evidence="1">
    <location>
        <position position="15"/>
    </location>
    <ligand>
        <name>Mg(2+)</name>
        <dbReference type="ChEBI" id="CHEBI:18420"/>
    </ligand>
</feature>
<feature type="binding site" evidence="1">
    <location>
        <position position="33"/>
    </location>
    <ligand>
        <name>substrate</name>
    </ligand>
</feature>
<feature type="binding site" evidence="1">
    <location>
        <position position="57"/>
    </location>
    <ligand>
        <name>substrate</name>
    </ligand>
</feature>
<feature type="binding site" evidence="1">
    <location>
        <position position="80"/>
    </location>
    <ligand>
        <name>substrate</name>
    </ligand>
</feature>
<feature type="binding site" evidence="1">
    <location>
        <position position="116"/>
    </location>
    <ligand>
        <name>ATP</name>
        <dbReference type="ChEBI" id="CHEBI:30616"/>
    </ligand>
</feature>
<feature type="binding site" evidence="1">
    <location>
        <position position="132"/>
    </location>
    <ligand>
        <name>substrate</name>
    </ligand>
</feature>
<accession>B2URY7</accession>
<proteinExistence type="inferred from homology"/>
<name>AROK_HELPS</name>
<organism>
    <name type="scientific">Helicobacter pylori (strain Shi470)</name>
    <dbReference type="NCBI Taxonomy" id="512562"/>
    <lineage>
        <taxon>Bacteria</taxon>
        <taxon>Pseudomonadati</taxon>
        <taxon>Campylobacterota</taxon>
        <taxon>Epsilonproteobacteria</taxon>
        <taxon>Campylobacterales</taxon>
        <taxon>Helicobacteraceae</taxon>
        <taxon>Helicobacter</taxon>
    </lineage>
</organism>
<sequence length="162" mass="18396">MRHLVLIGFMGSGKSSLAQELGLALKLEVLDTDMIISERVGLSVRGIFEELGEDNFRMFEKNLIDELKTLKTPHIISTGGGIVMHDNLKGLGTTFYLKMDFETLIKRLNQKEREKRPLLNDLTQAKELFEKRQVLYEKNASFIIDARGGLNNSLKQVLQFIA</sequence>
<protein>
    <recommendedName>
        <fullName evidence="1">Shikimate kinase</fullName>
        <shortName evidence="1">SK</shortName>
        <ecNumber evidence="1">2.7.1.71</ecNumber>
    </recommendedName>
</protein>
<gene>
    <name evidence="1" type="primary">aroK</name>
    <name type="ordered locus">HPSH_00795</name>
</gene>
<keyword id="KW-0028">Amino-acid biosynthesis</keyword>
<keyword id="KW-0057">Aromatic amino acid biosynthesis</keyword>
<keyword id="KW-0067">ATP-binding</keyword>
<keyword id="KW-0963">Cytoplasm</keyword>
<keyword id="KW-0418">Kinase</keyword>
<keyword id="KW-0460">Magnesium</keyword>
<keyword id="KW-0479">Metal-binding</keyword>
<keyword id="KW-0547">Nucleotide-binding</keyword>
<keyword id="KW-0808">Transferase</keyword>
<dbReference type="EC" id="2.7.1.71" evidence="1"/>
<dbReference type="EMBL" id="CP001072">
    <property type="protein sequence ID" value="ACD47619.1"/>
    <property type="molecule type" value="Genomic_DNA"/>
</dbReference>
<dbReference type="RefSeq" id="WP_001216269.1">
    <property type="nucleotide sequence ID" value="NC_010698.2"/>
</dbReference>
<dbReference type="SMR" id="B2URY7"/>
<dbReference type="KEGG" id="hps:HPSH_00795"/>
<dbReference type="HOGENOM" id="CLU_057607_4_0_7"/>
<dbReference type="UniPathway" id="UPA00053">
    <property type="reaction ID" value="UER00088"/>
</dbReference>
<dbReference type="GO" id="GO:0005829">
    <property type="term" value="C:cytosol"/>
    <property type="evidence" value="ECO:0007669"/>
    <property type="project" value="TreeGrafter"/>
</dbReference>
<dbReference type="GO" id="GO:0005524">
    <property type="term" value="F:ATP binding"/>
    <property type="evidence" value="ECO:0007669"/>
    <property type="project" value="UniProtKB-UniRule"/>
</dbReference>
<dbReference type="GO" id="GO:0000287">
    <property type="term" value="F:magnesium ion binding"/>
    <property type="evidence" value="ECO:0007669"/>
    <property type="project" value="UniProtKB-UniRule"/>
</dbReference>
<dbReference type="GO" id="GO:0004765">
    <property type="term" value="F:shikimate kinase activity"/>
    <property type="evidence" value="ECO:0007669"/>
    <property type="project" value="UniProtKB-UniRule"/>
</dbReference>
<dbReference type="GO" id="GO:0008652">
    <property type="term" value="P:amino acid biosynthetic process"/>
    <property type="evidence" value="ECO:0007669"/>
    <property type="project" value="UniProtKB-KW"/>
</dbReference>
<dbReference type="GO" id="GO:0009073">
    <property type="term" value="P:aromatic amino acid family biosynthetic process"/>
    <property type="evidence" value="ECO:0007669"/>
    <property type="project" value="UniProtKB-KW"/>
</dbReference>
<dbReference type="GO" id="GO:0009423">
    <property type="term" value="P:chorismate biosynthetic process"/>
    <property type="evidence" value="ECO:0007669"/>
    <property type="project" value="UniProtKB-UniRule"/>
</dbReference>
<dbReference type="CDD" id="cd00464">
    <property type="entry name" value="SK"/>
    <property type="match status" value="1"/>
</dbReference>
<dbReference type="FunFam" id="3.40.50.300:FF:001487">
    <property type="entry name" value="Shikimate kinase"/>
    <property type="match status" value="1"/>
</dbReference>
<dbReference type="Gene3D" id="3.40.50.300">
    <property type="entry name" value="P-loop containing nucleotide triphosphate hydrolases"/>
    <property type="match status" value="1"/>
</dbReference>
<dbReference type="HAMAP" id="MF_00109">
    <property type="entry name" value="Shikimate_kinase"/>
    <property type="match status" value="1"/>
</dbReference>
<dbReference type="InterPro" id="IPR027417">
    <property type="entry name" value="P-loop_NTPase"/>
</dbReference>
<dbReference type="InterPro" id="IPR031322">
    <property type="entry name" value="Shikimate/glucono_kinase"/>
</dbReference>
<dbReference type="InterPro" id="IPR000623">
    <property type="entry name" value="Shikimate_kinase/TSH1"/>
</dbReference>
<dbReference type="InterPro" id="IPR023000">
    <property type="entry name" value="Shikimate_kinase_CS"/>
</dbReference>
<dbReference type="PANTHER" id="PTHR21087">
    <property type="entry name" value="SHIKIMATE KINASE"/>
    <property type="match status" value="1"/>
</dbReference>
<dbReference type="PANTHER" id="PTHR21087:SF16">
    <property type="entry name" value="SHIKIMATE KINASE 1, CHLOROPLASTIC"/>
    <property type="match status" value="1"/>
</dbReference>
<dbReference type="Pfam" id="PF01202">
    <property type="entry name" value="SKI"/>
    <property type="match status" value="1"/>
</dbReference>
<dbReference type="PRINTS" id="PR01100">
    <property type="entry name" value="SHIKIMTKNASE"/>
</dbReference>
<dbReference type="SUPFAM" id="SSF52540">
    <property type="entry name" value="P-loop containing nucleoside triphosphate hydrolases"/>
    <property type="match status" value="1"/>
</dbReference>
<dbReference type="PROSITE" id="PS01128">
    <property type="entry name" value="SHIKIMATE_KINASE"/>
    <property type="match status" value="1"/>
</dbReference>
<reference key="1">
    <citation type="submission" date="2008-05" db="EMBL/GenBank/DDBJ databases">
        <title>Genome sequence of Helicobacter pylori from the remote Amazon: traces of Asian ancestry of the first Americans.</title>
        <authorList>
            <person name="Kersulyte D."/>
            <person name="Kalia A."/>
            <person name="Gilman R.H."/>
            <person name="Berg D.E."/>
        </authorList>
    </citation>
    <scope>NUCLEOTIDE SEQUENCE [LARGE SCALE GENOMIC DNA]</scope>
    <source>
        <strain>Shi470</strain>
    </source>
</reference>